<sequence>MQVTSVGHAGFLIQTQAGSILCDPWVNPAYFASWFPFPDNSGLDWGALGECDYLYVSHLHKDHFDAENLRAHVNKDAVVLLPDFPVPDLRNELQKLGFHRFFETTDSVKHRLRGPNGDLDVMIIALRAPADGPIGDSALVVADGETTAFNMNDARPVDLDVLASEFGHIDVHMLQYSGAIWYPMVYDMPARAKDAFGAQKRQRQMDRARQYIAQVGATWVVPSAGPPCFLAPELRHLNDDGSDPANIFPDQMVFLDQMRAHGQDGGLLMIPGSTADFTGTTLNSLRHPLPAEQVEAIFTTDKAAYIADYADRMAPVLAAQKAGWAAAAGEPLLQPLRTLFEPIMLQSNEICDGIGYPVELAIGPETIVLDFPKRAVREPIPDERFRYGFAIAPELVRTVLRDNEPDWVNTIFLSTRFRAWRVGGYNEYLYTFFKCLTDERIAYADGWFAEAHDDSSSITLNGWEIQRRCPHLKADLSKFGVVEGNTLTCNLHGWQWRLDDGRCLTARGHQLRSSRP</sequence>
<accession>P9WH21</accession>
<accession>L0TFC4</accession>
<accession>O07805</accession>
<accession>Q7D4T6</accession>
<dbReference type="EC" id="1.-.-.-"/>
<dbReference type="EMBL" id="AL123456">
    <property type="protein sequence ID" value="CCP46647.1"/>
    <property type="molecule type" value="Genomic_DNA"/>
</dbReference>
<dbReference type="PIR" id="F70521">
    <property type="entry name" value="F70521"/>
</dbReference>
<dbReference type="RefSeq" id="NP_218335.1">
    <property type="nucleotide sequence ID" value="NC_000962.3"/>
</dbReference>
<dbReference type="RefSeq" id="WP_003420837.1">
    <property type="nucleotide sequence ID" value="NZ_NVQJ01000022.1"/>
</dbReference>
<dbReference type="SMR" id="P9WH21"/>
<dbReference type="STRING" id="83332.Rv3818"/>
<dbReference type="PaxDb" id="83332-Rv3818"/>
<dbReference type="DNASU" id="886153"/>
<dbReference type="GeneID" id="886153"/>
<dbReference type="KEGG" id="mtu:Rv3818"/>
<dbReference type="KEGG" id="mtv:RVBD_3818"/>
<dbReference type="TubercuList" id="Rv3818"/>
<dbReference type="eggNOG" id="COG2146">
    <property type="taxonomic scope" value="Bacteria"/>
</dbReference>
<dbReference type="eggNOG" id="COG2220">
    <property type="taxonomic scope" value="Bacteria"/>
</dbReference>
<dbReference type="InParanoid" id="P9WH21"/>
<dbReference type="OrthoDB" id="6988582at2"/>
<dbReference type="Proteomes" id="UP000001584">
    <property type="component" value="Chromosome"/>
</dbReference>
<dbReference type="GO" id="GO:0005737">
    <property type="term" value="C:cytoplasm"/>
    <property type="evidence" value="ECO:0000318"/>
    <property type="project" value="GO_Central"/>
</dbReference>
<dbReference type="GO" id="GO:0051537">
    <property type="term" value="F:2 iron, 2 sulfur cluster binding"/>
    <property type="evidence" value="ECO:0007669"/>
    <property type="project" value="UniProtKB-KW"/>
</dbReference>
<dbReference type="GO" id="GO:0046872">
    <property type="term" value="F:metal ion binding"/>
    <property type="evidence" value="ECO:0007669"/>
    <property type="project" value="UniProtKB-KW"/>
</dbReference>
<dbReference type="GO" id="GO:0004497">
    <property type="term" value="F:monooxygenase activity"/>
    <property type="evidence" value="ECO:0007669"/>
    <property type="project" value="UniProtKB-ARBA"/>
</dbReference>
<dbReference type="GO" id="GO:0016705">
    <property type="term" value="F:oxidoreductase activity, acting on paired donors, with incorporation or reduction of molecular oxygen"/>
    <property type="evidence" value="ECO:0007669"/>
    <property type="project" value="UniProtKB-ARBA"/>
</dbReference>
<dbReference type="Gene3D" id="3.60.15.10">
    <property type="entry name" value="Ribonuclease Z/Hydroxyacylglutathione hydrolase-like"/>
    <property type="match status" value="1"/>
</dbReference>
<dbReference type="Gene3D" id="2.102.10.10">
    <property type="entry name" value="Rieske [2Fe-2S] iron-sulphur domain"/>
    <property type="match status" value="1"/>
</dbReference>
<dbReference type="InterPro" id="IPR036866">
    <property type="entry name" value="RibonucZ/Hydroxyglut_hydro"/>
</dbReference>
<dbReference type="InterPro" id="IPR017941">
    <property type="entry name" value="Rieske_2Fe-2S"/>
</dbReference>
<dbReference type="InterPro" id="IPR036922">
    <property type="entry name" value="Rieske_2Fe-2S_sf"/>
</dbReference>
<dbReference type="PANTHER" id="PTHR15032">
    <property type="entry name" value="N-ACYL-PHOSPHATIDYLETHANOLAMINE-HYDROLYZING PHOSPHOLIPASE D"/>
    <property type="match status" value="1"/>
</dbReference>
<dbReference type="PANTHER" id="PTHR15032:SF4">
    <property type="entry name" value="N-ACYL-PHOSPHATIDYLETHANOLAMINE-HYDROLYZING PHOSPHOLIPASE D"/>
    <property type="match status" value="1"/>
</dbReference>
<dbReference type="Pfam" id="PF13483">
    <property type="entry name" value="Lactamase_B_3"/>
    <property type="match status" value="1"/>
</dbReference>
<dbReference type="Pfam" id="PF00355">
    <property type="entry name" value="Rieske"/>
    <property type="match status" value="1"/>
</dbReference>
<dbReference type="Pfam" id="PF25451">
    <property type="entry name" value="SCP2_Rv3818"/>
    <property type="match status" value="1"/>
</dbReference>
<dbReference type="SUPFAM" id="SSF50022">
    <property type="entry name" value="ISP domain"/>
    <property type="match status" value="1"/>
</dbReference>
<dbReference type="SUPFAM" id="SSF56281">
    <property type="entry name" value="Metallo-hydrolase/oxidoreductase"/>
    <property type="match status" value="1"/>
</dbReference>
<dbReference type="PROSITE" id="PS51296">
    <property type="entry name" value="RIESKE"/>
    <property type="match status" value="1"/>
</dbReference>
<keyword id="KW-0001">2Fe-2S</keyword>
<keyword id="KW-0408">Iron</keyword>
<keyword id="KW-0411">Iron-sulfur</keyword>
<keyword id="KW-0479">Metal-binding</keyword>
<keyword id="KW-0560">Oxidoreductase</keyword>
<keyword id="KW-1185">Reference proteome</keyword>
<protein>
    <recommendedName>
        <fullName>Putative Rieske 2Fe-2S iron-sulfur protein Rv3818</fullName>
        <ecNumber>1.-.-.-</ecNumber>
    </recommendedName>
</protein>
<reference key="1">
    <citation type="journal article" date="1998" name="Nature">
        <title>Deciphering the biology of Mycobacterium tuberculosis from the complete genome sequence.</title>
        <authorList>
            <person name="Cole S.T."/>
            <person name="Brosch R."/>
            <person name="Parkhill J."/>
            <person name="Garnier T."/>
            <person name="Churcher C.M."/>
            <person name="Harris D.E."/>
            <person name="Gordon S.V."/>
            <person name="Eiglmeier K."/>
            <person name="Gas S."/>
            <person name="Barry C.E. III"/>
            <person name="Tekaia F."/>
            <person name="Badcock K."/>
            <person name="Basham D."/>
            <person name="Brown D."/>
            <person name="Chillingworth T."/>
            <person name="Connor R."/>
            <person name="Davies R.M."/>
            <person name="Devlin K."/>
            <person name="Feltwell T."/>
            <person name="Gentles S."/>
            <person name="Hamlin N."/>
            <person name="Holroyd S."/>
            <person name="Hornsby T."/>
            <person name="Jagels K."/>
            <person name="Krogh A."/>
            <person name="McLean J."/>
            <person name="Moule S."/>
            <person name="Murphy L.D."/>
            <person name="Oliver S."/>
            <person name="Osborne J."/>
            <person name="Quail M.A."/>
            <person name="Rajandream M.A."/>
            <person name="Rogers J."/>
            <person name="Rutter S."/>
            <person name="Seeger K."/>
            <person name="Skelton S."/>
            <person name="Squares S."/>
            <person name="Squares R."/>
            <person name="Sulston J.E."/>
            <person name="Taylor K."/>
            <person name="Whitehead S."/>
            <person name="Barrell B.G."/>
        </authorList>
    </citation>
    <scope>NUCLEOTIDE SEQUENCE [LARGE SCALE GENOMIC DNA]</scope>
    <source>
        <strain>ATCC 25618 / H37Rv</strain>
    </source>
</reference>
<reference key="2">
    <citation type="journal article" date="2008" name="BMC Syst. Biol.">
        <title>targetTB: a target identification pipeline for Mycobacterium tuberculosis through an interactome, reactome and genome-scale structural analysis.</title>
        <authorList>
            <person name="Raman K."/>
            <person name="Yeturu K."/>
            <person name="Chandra N."/>
        </authorList>
    </citation>
    <scope>IDENTIFICATION AS A DRUG TARGET [LARGE SCALE ANALYSIS]</scope>
</reference>
<reference key="3">
    <citation type="journal article" date="2011" name="Mol. Cell. Proteomics">
        <title>Proteogenomic analysis of Mycobacterium tuberculosis by high resolution mass spectrometry.</title>
        <authorList>
            <person name="Kelkar D.S."/>
            <person name="Kumar D."/>
            <person name="Kumar P."/>
            <person name="Balakrishnan L."/>
            <person name="Muthusamy B."/>
            <person name="Yadav A.K."/>
            <person name="Shrivastava P."/>
            <person name="Marimuthu A."/>
            <person name="Anand S."/>
            <person name="Sundaram H."/>
            <person name="Kingsbury R."/>
            <person name="Harsha H.C."/>
            <person name="Nair B."/>
            <person name="Prasad T.S."/>
            <person name="Chauhan D.S."/>
            <person name="Katoch K."/>
            <person name="Katoch V.M."/>
            <person name="Kumar P."/>
            <person name="Chaerkady R."/>
            <person name="Ramachandran S."/>
            <person name="Dash D."/>
            <person name="Pandey A."/>
        </authorList>
    </citation>
    <scope>IDENTIFICATION BY MASS SPECTROMETRY [LARGE SCALE ANALYSIS]</scope>
    <source>
        <strain>ATCC 25618 / H37Rv</strain>
    </source>
</reference>
<comment type="cofactor">
    <cofactor evidence="1">
        <name>[2Fe-2S] cluster</name>
        <dbReference type="ChEBI" id="CHEBI:190135"/>
    </cofactor>
    <text evidence="1">Binds 1 [2Fe-2S] cluster per subunit.</text>
</comment>
<comment type="miscellaneous">
    <text>Was identified as a high-confidence drug target.</text>
</comment>
<feature type="chain" id="PRO_0000396106" description="Putative Rieske 2Fe-2S iron-sulfur protein Rv3818">
    <location>
        <begin position="1"/>
        <end position="516"/>
    </location>
</feature>
<feature type="domain" description="Rieske" evidence="1">
    <location>
        <begin position="429"/>
        <end position="516"/>
    </location>
</feature>
<feature type="binding site" evidence="1">
    <location>
        <position position="469"/>
    </location>
    <ligand>
        <name>[2Fe-2S] cluster</name>
        <dbReference type="ChEBI" id="CHEBI:190135"/>
    </ligand>
</feature>
<feature type="binding site" evidence="1">
    <location>
        <position position="471"/>
    </location>
    <ligand>
        <name>[2Fe-2S] cluster</name>
        <dbReference type="ChEBI" id="CHEBI:190135"/>
    </ligand>
</feature>
<feature type="binding site" evidence="1">
    <location>
        <position position="489"/>
    </location>
    <ligand>
        <name>[2Fe-2S] cluster</name>
        <dbReference type="ChEBI" id="CHEBI:190135"/>
    </ligand>
</feature>
<feature type="binding site" evidence="1">
    <location>
        <position position="492"/>
    </location>
    <ligand>
        <name>[2Fe-2S] cluster</name>
        <dbReference type="ChEBI" id="CHEBI:190135"/>
    </ligand>
</feature>
<name>Y3818_MYCTU</name>
<gene>
    <name type="ordered locus">Rv3818</name>
</gene>
<organism>
    <name type="scientific">Mycobacterium tuberculosis (strain ATCC 25618 / H37Rv)</name>
    <dbReference type="NCBI Taxonomy" id="83332"/>
    <lineage>
        <taxon>Bacteria</taxon>
        <taxon>Bacillati</taxon>
        <taxon>Actinomycetota</taxon>
        <taxon>Actinomycetes</taxon>
        <taxon>Mycobacteriales</taxon>
        <taxon>Mycobacteriaceae</taxon>
        <taxon>Mycobacterium</taxon>
        <taxon>Mycobacterium tuberculosis complex</taxon>
    </lineage>
</organism>
<evidence type="ECO:0000255" key="1">
    <source>
        <dbReference type="PROSITE-ProRule" id="PRU00628"/>
    </source>
</evidence>
<proteinExistence type="evidence at protein level"/>